<feature type="chain" id="PRO_0000387846" description="4-hydroxy-2-oxovalerate aldolase">
    <location>
        <begin position="1"/>
        <end position="352"/>
    </location>
</feature>
<feature type="domain" description="Pyruvate carboxyltransferase" evidence="1">
    <location>
        <begin position="13"/>
        <end position="265"/>
    </location>
</feature>
<feature type="active site" description="Proton acceptor" evidence="1">
    <location>
        <position position="25"/>
    </location>
</feature>
<feature type="binding site" evidence="1">
    <location>
        <begin position="21"/>
        <end position="22"/>
    </location>
    <ligand>
        <name>substrate</name>
    </ligand>
</feature>
<feature type="binding site" evidence="1">
    <location>
        <position position="22"/>
    </location>
    <ligand>
        <name>Mn(2+)</name>
        <dbReference type="ChEBI" id="CHEBI:29035"/>
    </ligand>
</feature>
<feature type="binding site" evidence="1">
    <location>
        <position position="175"/>
    </location>
    <ligand>
        <name>substrate</name>
    </ligand>
</feature>
<feature type="binding site" evidence="1">
    <location>
        <position position="204"/>
    </location>
    <ligand>
        <name>Mn(2+)</name>
        <dbReference type="ChEBI" id="CHEBI:29035"/>
    </ligand>
</feature>
<feature type="binding site" evidence="1">
    <location>
        <position position="204"/>
    </location>
    <ligand>
        <name>substrate</name>
    </ligand>
</feature>
<feature type="binding site" evidence="1">
    <location>
        <position position="206"/>
    </location>
    <ligand>
        <name>Mn(2+)</name>
        <dbReference type="ChEBI" id="CHEBI:29035"/>
    </ligand>
</feature>
<feature type="binding site" evidence="1">
    <location>
        <position position="295"/>
    </location>
    <ligand>
        <name>substrate</name>
    </ligand>
</feature>
<feature type="site" description="Transition state stabilizer" evidence="1">
    <location>
        <position position="21"/>
    </location>
</feature>
<sequence>MTTDIFFNPMWDVRLTDTSLRDGSHHKRHQFTKDEVQAIVAALDVAGVPVIEVTHGDGLGGSSFNYGFSKTPEQELIKLAAETAKEAKIAFLMLPGVGTKEDIKEAQNNGGSICRIATHCTEADVSIQHFGLARELGLETVGFLMMSHTIPPEKLAQQARIMADAGCQCVYVVDSAGALVLEGVRDRVAALVAELGDDAQVGFHGHENLGLGVANSVEAVRAGAKQIDGSCRRFGAGAGNAPVEALIGVFDKIGVKTGIDFFDIADAAEEVVAPAMPAECLLDRNALIMGYSGVYSSFLKHAIRQSERYGVPAHQLLHRAGQRKLIGGQEDQLIDIALEIKREQESGAAAAR</sequence>
<organism>
    <name type="scientific">Mycobacterium avium (strain 104)</name>
    <dbReference type="NCBI Taxonomy" id="243243"/>
    <lineage>
        <taxon>Bacteria</taxon>
        <taxon>Bacillati</taxon>
        <taxon>Actinomycetota</taxon>
        <taxon>Actinomycetes</taxon>
        <taxon>Mycobacteriales</taxon>
        <taxon>Mycobacteriaceae</taxon>
        <taxon>Mycobacterium</taxon>
        <taxon>Mycobacterium avium complex (MAC)</taxon>
    </lineage>
</organism>
<keyword id="KW-0058">Aromatic hydrocarbons catabolism</keyword>
<keyword id="KW-0456">Lyase</keyword>
<keyword id="KW-0464">Manganese</keyword>
<keyword id="KW-0479">Metal-binding</keyword>
<accession>A0QAG9</accession>
<comment type="catalytic activity">
    <reaction evidence="1">
        <text>(S)-4-hydroxy-2-oxopentanoate = acetaldehyde + pyruvate</text>
        <dbReference type="Rhea" id="RHEA:22624"/>
        <dbReference type="ChEBI" id="CHEBI:15343"/>
        <dbReference type="ChEBI" id="CHEBI:15361"/>
        <dbReference type="ChEBI" id="CHEBI:73143"/>
        <dbReference type="EC" id="4.1.3.39"/>
    </reaction>
</comment>
<comment type="similarity">
    <text evidence="1">Belongs to the 4-hydroxy-2-oxovalerate aldolase family.</text>
</comment>
<name>HOA_MYCA1</name>
<reference key="1">
    <citation type="submission" date="2006-10" db="EMBL/GenBank/DDBJ databases">
        <authorList>
            <person name="Fleischmann R.D."/>
            <person name="Dodson R.J."/>
            <person name="Haft D.H."/>
            <person name="Merkel J.S."/>
            <person name="Nelson W.C."/>
            <person name="Fraser C.M."/>
        </authorList>
    </citation>
    <scope>NUCLEOTIDE SEQUENCE [LARGE SCALE GENOMIC DNA]</scope>
    <source>
        <strain>104</strain>
    </source>
</reference>
<protein>
    <recommendedName>
        <fullName evidence="1">4-hydroxy-2-oxovalerate aldolase</fullName>
        <shortName evidence="1">HOA</shortName>
        <ecNumber evidence="1">4.1.3.39</ecNumber>
    </recommendedName>
    <alternativeName>
        <fullName evidence="1">4-hydroxy-2-keto-pentanoic acid aldolase</fullName>
    </alternativeName>
    <alternativeName>
        <fullName evidence="1">4-hydroxy-2-oxopentanoate aldolase</fullName>
    </alternativeName>
</protein>
<gene>
    <name type="ordered locus">MAV_0627</name>
</gene>
<dbReference type="EC" id="4.1.3.39" evidence="1"/>
<dbReference type="EMBL" id="CP000479">
    <property type="protein sequence ID" value="ABK64511.1"/>
    <property type="molecule type" value="Genomic_DNA"/>
</dbReference>
<dbReference type="SMR" id="A0QAG9"/>
<dbReference type="KEGG" id="mav:MAV_0627"/>
<dbReference type="HOGENOM" id="CLU_049173_0_0_11"/>
<dbReference type="Proteomes" id="UP000001574">
    <property type="component" value="Chromosome"/>
</dbReference>
<dbReference type="GO" id="GO:0003852">
    <property type="term" value="F:2-isopropylmalate synthase activity"/>
    <property type="evidence" value="ECO:0007669"/>
    <property type="project" value="TreeGrafter"/>
</dbReference>
<dbReference type="GO" id="GO:0008701">
    <property type="term" value="F:4-hydroxy-2-oxovalerate aldolase activity"/>
    <property type="evidence" value="ECO:0007669"/>
    <property type="project" value="UniProtKB-UniRule"/>
</dbReference>
<dbReference type="GO" id="GO:0030145">
    <property type="term" value="F:manganese ion binding"/>
    <property type="evidence" value="ECO:0007669"/>
    <property type="project" value="UniProtKB-UniRule"/>
</dbReference>
<dbReference type="GO" id="GO:0009056">
    <property type="term" value="P:catabolic process"/>
    <property type="evidence" value="ECO:0007669"/>
    <property type="project" value="UniProtKB-KW"/>
</dbReference>
<dbReference type="GO" id="GO:0009098">
    <property type="term" value="P:L-leucine biosynthetic process"/>
    <property type="evidence" value="ECO:0007669"/>
    <property type="project" value="TreeGrafter"/>
</dbReference>
<dbReference type="CDD" id="cd07943">
    <property type="entry name" value="DRE_TIM_HOA"/>
    <property type="match status" value="1"/>
</dbReference>
<dbReference type="FunFam" id="3.20.20.70:FF:000072">
    <property type="entry name" value="4-hydroxy-2-oxovalerate aldolase"/>
    <property type="match status" value="1"/>
</dbReference>
<dbReference type="Gene3D" id="1.10.8.60">
    <property type="match status" value="1"/>
</dbReference>
<dbReference type="Gene3D" id="3.20.20.70">
    <property type="entry name" value="Aldolase class I"/>
    <property type="match status" value="1"/>
</dbReference>
<dbReference type="HAMAP" id="MF_01656">
    <property type="entry name" value="HOA"/>
    <property type="match status" value="1"/>
</dbReference>
<dbReference type="InterPro" id="IPR050073">
    <property type="entry name" value="2-IPM_HCS-like"/>
</dbReference>
<dbReference type="InterPro" id="IPR017629">
    <property type="entry name" value="4OH_2_O-val_aldolase"/>
</dbReference>
<dbReference type="InterPro" id="IPR013785">
    <property type="entry name" value="Aldolase_TIM"/>
</dbReference>
<dbReference type="InterPro" id="IPR012425">
    <property type="entry name" value="DmpG_comm"/>
</dbReference>
<dbReference type="InterPro" id="IPR035685">
    <property type="entry name" value="DRE_TIM_HOA"/>
</dbReference>
<dbReference type="InterPro" id="IPR000891">
    <property type="entry name" value="PYR_CT"/>
</dbReference>
<dbReference type="NCBIfam" id="TIGR03217">
    <property type="entry name" value="4OH_2_O_val_ald"/>
    <property type="match status" value="1"/>
</dbReference>
<dbReference type="NCBIfam" id="NF006049">
    <property type="entry name" value="PRK08195.1"/>
    <property type="match status" value="1"/>
</dbReference>
<dbReference type="PANTHER" id="PTHR10277:SF9">
    <property type="entry name" value="2-ISOPROPYLMALATE SYNTHASE 1, CHLOROPLASTIC-RELATED"/>
    <property type="match status" value="1"/>
</dbReference>
<dbReference type="PANTHER" id="PTHR10277">
    <property type="entry name" value="HOMOCITRATE SYNTHASE-RELATED"/>
    <property type="match status" value="1"/>
</dbReference>
<dbReference type="Pfam" id="PF07836">
    <property type="entry name" value="DmpG_comm"/>
    <property type="match status" value="1"/>
</dbReference>
<dbReference type="Pfam" id="PF00682">
    <property type="entry name" value="HMGL-like"/>
    <property type="match status" value="1"/>
</dbReference>
<dbReference type="SUPFAM" id="SSF51569">
    <property type="entry name" value="Aldolase"/>
    <property type="match status" value="1"/>
</dbReference>
<dbReference type="SUPFAM" id="SSF89000">
    <property type="entry name" value="post-HMGL domain-like"/>
    <property type="match status" value="1"/>
</dbReference>
<dbReference type="PROSITE" id="PS50991">
    <property type="entry name" value="PYR_CT"/>
    <property type="match status" value="1"/>
</dbReference>
<proteinExistence type="inferred from homology"/>
<evidence type="ECO:0000255" key="1">
    <source>
        <dbReference type="HAMAP-Rule" id="MF_01656"/>
    </source>
</evidence>